<protein>
    <recommendedName>
        <fullName evidence="1">Probable ribonuclease FAU-1</fullName>
        <ecNumber evidence="1">3.1.26.-</ecNumber>
    </recommendedName>
    <alternativeName>
        <fullName evidence="1">RNA-binding protein FAU-1</fullName>
    </alternativeName>
</protein>
<dbReference type="EC" id="3.1.26.-" evidence="1"/>
<dbReference type="EMBL" id="BA000023">
    <property type="protein sequence ID" value="BAB65844.1"/>
    <property type="molecule type" value="Genomic_DNA"/>
</dbReference>
<dbReference type="RefSeq" id="WP_010978827.1">
    <property type="nucleotide sequence ID" value="NC_003106.2"/>
</dbReference>
<dbReference type="SMR" id="Q973R6"/>
<dbReference type="STRING" id="273063.STK_08310"/>
<dbReference type="GeneID" id="1458794"/>
<dbReference type="KEGG" id="sto:STK_08310"/>
<dbReference type="PATRIC" id="fig|273063.9.peg.935"/>
<dbReference type="eggNOG" id="arCOG04307">
    <property type="taxonomic scope" value="Archaea"/>
</dbReference>
<dbReference type="OrthoDB" id="84798at2157"/>
<dbReference type="Proteomes" id="UP000001015">
    <property type="component" value="Chromosome"/>
</dbReference>
<dbReference type="GO" id="GO:0035925">
    <property type="term" value="F:mRNA 3'-UTR AU-rich region binding"/>
    <property type="evidence" value="ECO:0007669"/>
    <property type="project" value="UniProtKB-UniRule"/>
</dbReference>
<dbReference type="GO" id="GO:0016891">
    <property type="term" value="F:RNA endonuclease activity, producing 5'-phosphomonoesters"/>
    <property type="evidence" value="ECO:0007669"/>
    <property type="project" value="UniProtKB-UniRule"/>
</dbReference>
<dbReference type="GO" id="GO:0006364">
    <property type="term" value="P:rRNA processing"/>
    <property type="evidence" value="ECO:0007669"/>
    <property type="project" value="UniProtKB-UniRule"/>
</dbReference>
<dbReference type="Gene3D" id="2.40.380.10">
    <property type="entry name" value="FomD-like"/>
    <property type="match status" value="1"/>
</dbReference>
<dbReference type="HAMAP" id="MF_01910">
    <property type="entry name" value="RNA_binding_AU_1"/>
    <property type="match status" value="1"/>
</dbReference>
<dbReference type="InterPro" id="IPR007295">
    <property type="entry name" value="DUF402"/>
</dbReference>
<dbReference type="InterPro" id="IPR035930">
    <property type="entry name" value="FomD-like_sf"/>
</dbReference>
<dbReference type="InterPro" id="IPR050212">
    <property type="entry name" value="Ntdp-like"/>
</dbReference>
<dbReference type="InterPro" id="IPR016730">
    <property type="entry name" value="RNA-bd_FAU-1"/>
</dbReference>
<dbReference type="PANTHER" id="PTHR39159">
    <property type="match status" value="1"/>
</dbReference>
<dbReference type="PANTHER" id="PTHR39159:SF1">
    <property type="entry name" value="UPF0374 PROTEIN YGAC"/>
    <property type="match status" value="1"/>
</dbReference>
<dbReference type="Pfam" id="PF04167">
    <property type="entry name" value="DUF402"/>
    <property type="match status" value="1"/>
</dbReference>
<dbReference type="PIRSF" id="PIRSF018644">
    <property type="entry name" value="RNA-binding_FAU-1"/>
    <property type="match status" value="1"/>
</dbReference>
<dbReference type="SUPFAM" id="SSF159234">
    <property type="entry name" value="FomD-like"/>
    <property type="match status" value="1"/>
</dbReference>
<accession>Q973R6</accession>
<sequence length="412" mass="48240">MKVRIRGIYATALTKLFLDNGFEIVQATPQISDRFSLPIRAEPSDVTIKDGNDKGELISIGEDIYSFLRKTFQNSFIWKSPVRLYSVIETNNCKFMDYQVEPCLDKGLVVKPPSEGRIILSSPKAVGKYSMVWRGDGKTFFSEHIRDREEKTRLLSISIPFNKKGYNVKWRSNAPFASNIVLKEELEKLAIRFDNNDFRQQGEDFIKVTVSLEDKIMLDEIRKKVLPNTIRFHHMLKMSFSNEVDEIEQTSMNNEELLDKLITDYMGIEHIKPDGRKFELKEGKVIYKEVNSDYYIVRLMRVFSREGIYDGLNVKKEEGDYDIVEFDSRKWYQIHRYYNKDGKLKGIYVNISTPPELLRGKLRYLDLEVDVVKVGDEVRIIDLEELEKNKEIIGETMYKKIFTIIEEVKKIL</sequence>
<reference key="1">
    <citation type="journal article" date="2001" name="DNA Res.">
        <title>Complete genome sequence of an aerobic thermoacidophilic Crenarchaeon, Sulfolobus tokodaii strain7.</title>
        <authorList>
            <person name="Kawarabayasi Y."/>
            <person name="Hino Y."/>
            <person name="Horikawa H."/>
            <person name="Jin-no K."/>
            <person name="Takahashi M."/>
            <person name="Sekine M."/>
            <person name="Baba S."/>
            <person name="Ankai A."/>
            <person name="Kosugi H."/>
            <person name="Hosoyama A."/>
            <person name="Fukui S."/>
            <person name="Nagai Y."/>
            <person name="Nishijima K."/>
            <person name="Otsuka R."/>
            <person name="Nakazawa H."/>
            <person name="Takamiya M."/>
            <person name="Kato Y."/>
            <person name="Yoshizawa T."/>
            <person name="Tanaka T."/>
            <person name="Kudoh Y."/>
            <person name="Yamazaki J."/>
            <person name="Kushida N."/>
            <person name="Oguchi A."/>
            <person name="Aoki K."/>
            <person name="Masuda S."/>
            <person name="Yanagii M."/>
            <person name="Nishimura M."/>
            <person name="Yamagishi A."/>
            <person name="Oshima T."/>
            <person name="Kikuchi H."/>
        </authorList>
    </citation>
    <scope>NUCLEOTIDE SEQUENCE [LARGE SCALE GENOMIC DNA]</scope>
    <source>
        <strain>DSM 16993 / JCM 10545 / NBRC 100140 / 7</strain>
    </source>
</reference>
<keyword id="KW-0255">Endonuclease</keyword>
<keyword id="KW-0378">Hydrolase</keyword>
<keyword id="KW-0540">Nuclease</keyword>
<keyword id="KW-1185">Reference proteome</keyword>
<keyword id="KW-0694">RNA-binding</keyword>
<keyword id="KW-0698">rRNA processing</keyword>
<evidence type="ECO:0000255" key="1">
    <source>
        <dbReference type="HAMAP-Rule" id="MF_01910"/>
    </source>
</evidence>
<gene>
    <name evidence="1" type="primary">fau-1</name>
    <name type="ordered locus">STK_08310</name>
</gene>
<comment type="function">
    <text evidence="1">Probable RNase involved in rRNA stability through maturation and/or degradation of precursor rRNAs. Binds to RNA in loop regions with AU-rich sequences.</text>
</comment>
<comment type="similarity">
    <text evidence="1">Belongs to the FAU-1 family.</text>
</comment>
<name>FAU1_SULTO</name>
<feature type="chain" id="PRO_0000334213" description="Probable ribonuclease FAU-1">
    <location>
        <begin position="1"/>
        <end position="412"/>
    </location>
</feature>
<proteinExistence type="inferred from homology"/>
<organism>
    <name type="scientific">Sulfurisphaera tokodaii (strain DSM 16993 / JCM 10545 / NBRC 100140 / 7)</name>
    <name type="common">Sulfolobus tokodaii</name>
    <dbReference type="NCBI Taxonomy" id="273063"/>
    <lineage>
        <taxon>Archaea</taxon>
        <taxon>Thermoproteota</taxon>
        <taxon>Thermoprotei</taxon>
        <taxon>Sulfolobales</taxon>
        <taxon>Sulfolobaceae</taxon>
        <taxon>Sulfurisphaera</taxon>
    </lineage>
</organism>